<comment type="function">
    <text evidence="1">Specifically methylates the N4 position of cytidine in position 1402 (C1402) of 16S rRNA.</text>
</comment>
<comment type="catalytic activity">
    <reaction evidence="1">
        <text>cytidine(1402) in 16S rRNA + S-adenosyl-L-methionine = N(4)-methylcytidine(1402) in 16S rRNA + S-adenosyl-L-homocysteine + H(+)</text>
        <dbReference type="Rhea" id="RHEA:42928"/>
        <dbReference type="Rhea" id="RHEA-COMP:10286"/>
        <dbReference type="Rhea" id="RHEA-COMP:10287"/>
        <dbReference type="ChEBI" id="CHEBI:15378"/>
        <dbReference type="ChEBI" id="CHEBI:57856"/>
        <dbReference type="ChEBI" id="CHEBI:59789"/>
        <dbReference type="ChEBI" id="CHEBI:74506"/>
        <dbReference type="ChEBI" id="CHEBI:82748"/>
        <dbReference type="EC" id="2.1.1.199"/>
    </reaction>
</comment>
<comment type="subcellular location">
    <subcellularLocation>
        <location evidence="1">Cytoplasm</location>
    </subcellularLocation>
</comment>
<comment type="similarity">
    <text evidence="1">Belongs to the methyltransferase superfamily. RsmH family.</text>
</comment>
<feature type="chain" id="PRO_0000387128" description="Ribosomal RNA small subunit methyltransferase H">
    <location>
        <begin position="1"/>
        <end position="313"/>
    </location>
</feature>
<feature type="binding site" evidence="1">
    <location>
        <begin position="35"/>
        <end position="37"/>
    </location>
    <ligand>
        <name>S-adenosyl-L-methionine</name>
        <dbReference type="ChEBI" id="CHEBI:59789"/>
    </ligand>
</feature>
<feature type="binding site" evidence="1">
    <location>
        <position position="55"/>
    </location>
    <ligand>
        <name>S-adenosyl-L-methionine</name>
        <dbReference type="ChEBI" id="CHEBI:59789"/>
    </ligand>
</feature>
<feature type="binding site" evidence="1">
    <location>
        <position position="79"/>
    </location>
    <ligand>
        <name>S-adenosyl-L-methionine</name>
        <dbReference type="ChEBI" id="CHEBI:59789"/>
    </ligand>
</feature>
<feature type="binding site" evidence="1">
    <location>
        <position position="101"/>
    </location>
    <ligand>
        <name>S-adenosyl-L-methionine</name>
        <dbReference type="ChEBI" id="CHEBI:59789"/>
    </ligand>
</feature>
<feature type="binding site" evidence="1">
    <location>
        <position position="108"/>
    </location>
    <ligand>
        <name>S-adenosyl-L-methionine</name>
        <dbReference type="ChEBI" id="CHEBI:59789"/>
    </ligand>
</feature>
<reference key="1">
    <citation type="journal article" date="2006" name="BMC Genomics">
        <title>Complete genome sequence of Shigella flexneri 5b and comparison with Shigella flexneri 2a.</title>
        <authorList>
            <person name="Nie H."/>
            <person name="Yang F."/>
            <person name="Zhang X."/>
            <person name="Yang J."/>
            <person name="Chen L."/>
            <person name="Wang J."/>
            <person name="Xiong Z."/>
            <person name="Peng J."/>
            <person name="Sun L."/>
            <person name="Dong J."/>
            <person name="Xue Y."/>
            <person name="Xu X."/>
            <person name="Chen S."/>
            <person name="Yao Z."/>
            <person name="Shen Y."/>
            <person name="Jin Q."/>
        </authorList>
    </citation>
    <scope>NUCLEOTIDE SEQUENCE [LARGE SCALE GENOMIC DNA]</scope>
    <source>
        <strain>8401</strain>
    </source>
</reference>
<protein>
    <recommendedName>
        <fullName evidence="1">Ribosomal RNA small subunit methyltransferase H</fullName>
        <ecNumber evidence="1">2.1.1.199</ecNumber>
    </recommendedName>
    <alternativeName>
        <fullName evidence="1">16S rRNA m(4)C1402 methyltransferase</fullName>
    </alternativeName>
    <alternativeName>
        <fullName evidence="1">rRNA (cytosine-N(4)-)-methyltransferase RsmH</fullName>
    </alternativeName>
</protein>
<dbReference type="EC" id="2.1.1.199" evidence="1"/>
<dbReference type="EMBL" id="CP000266">
    <property type="protein sequence ID" value="ABF02361.1"/>
    <property type="molecule type" value="Genomic_DNA"/>
</dbReference>
<dbReference type="RefSeq" id="WP_000970468.1">
    <property type="nucleotide sequence ID" value="NC_008258.1"/>
</dbReference>
<dbReference type="SMR" id="Q0T8B5"/>
<dbReference type="KEGG" id="sfv:SFV_0075"/>
<dbReference type="HOGENOM" id="CLU_038422_2_0_6"/>
<dbReference type="Proteomes" id="UP000000659">
    <property type="component" value="Chromosome"/>
</dbReference>
<dbReference type="GO" id="GO:0005737">
    <property type="term" value="C:cytoplasm"/>
    <property type="evidence" value="ECO:0007669"/>
    <property type="project" value="UniProtKB-SubCell"/>
</dbReference>
<dbReference type="GO" id="GO:0071424">
    <property type="term" value="F:rRNA (cytosine-N4-)-methyltransferase activity"/>
    <property type="evidence" value="ECO:0007669"/>
    <property type="project" value="UniProtKB-UniRule"/>
</dbReference>
<dbReference type="GO" id="GO:0070475">
    <property type="term" value="P:rRNA base methylation"/>
    <property type="evidence" value="ECO:0007669"/>
    <property type="project" value="UniProtKB-UniRule"/>
</dbReference>
<dbReference type="FunFam" id="1.10.150.170:FF:000001">
    <property type="entry name" value="Ribosomal RNA small subunit methyltransferase H"/>
    <property type="match status" value="1"/>
</dbReference>
<dbReference type="Gene3D" id="1.10.150.170">
    <property type="entry name" value="Putative methyltransferase TM0872, insert domain"/>
    <property type="match status" value="1"/>
</dbReference>
<dbReference type="Gene3D" id="3.40.50.150">
    <property type="entry name" value="Vaccinia Virus protein VP39"/>
    <property type="match status" value="1"/>
</dbReference>
<dbReference type="HAMAP" id="MF_01007">
    <property type="entry name" value="16SrRNA_methyltr_H"/>
    <property type="match status" value="1"/>
</dbReference>
<dbReference type="InterPro" id="IPR002903">
    <property type="entry name" value="RsmH"/>
</dbReference>
<dbReference type="InterPro" id="IPR023397">
    <property type="entry name" value="SAM-dep_MeTrfase_MraW_recog"/>
</dbReference>
<dbReference type="InterPro" id="IPR029063">
    <property type="entry name" value="SAM-dependent_MTases_sf"/>
</dbReference>
<dbReference type="NCBIfam" id="TIGR00006">
    <property type="entry name" value="16S rRNA (cytosine(1402)-N(4))-methyltransferase RsmH"/>
    <property type="match status" value="1"/>
</dbReference>
<dbReference type="PANTHER" id="PTHR11265:SF0">
    <property type="entry name" value="12S RRNA N4-METHYLCYTIDINE METHYLTRANSFERASE"/>
    <property type="match status" value="1"/>
</dbReference>
<dbReference type="PANTHER" id="PTHR11265">
    <property type="entry name" value="S-ADENOSYL-METHYLTRANSFERASE MRAW"/>
    <property type="match status" value="1"/>
</dbReference>
<dbReference type="Pfam" id="PF01795">
    <property type="entry name" value="Methyltransf_5"/>
    <property type="match status" value="1"/>
</dbReference>
<dbReference type="PIRSF" id="PIRSF004486">
    <property type="entry name" value="MraW"/>
    <property type="match status" value="1"/>
</dbReference>
<dbReference type="SUPFAM" id="SSF81799">
    <property type="entry name" value="Putative methyltransferase TM0872, insert domain"/>
    <property type="match status" value="1"/>
</dbReference>
<dbReference type="SUPFAM" id="SSF53335">
    <property type="entry name" value="S-adenosyl-L-methionine-dependent methyltransferases"/>
    <property type="match status" value="1"/>
</dbReference>
<proteinExistence type="inferred from homology"/>
<sequence length="313" mass="34845">MMENYKHTTVLLDEAVNGLNIRPDGIYIDGTFGRGGHSRLILSQLGEEGRLLAIDRDPQAIAVAKTIDDPRFSIIHGPFSALGEYVAERDLIGKIDGILLDLGVSSPQLDDAERGFSFMRDGPLDMRMDPTRGQSAAEWLQTAEEADIAWVLKTYGEEHFAKRIARAIVERNREQPMTRTKELAEVVAAATPVKDKFKHPATRTFQAVRIWVNSELEEIEQALKSSLNVLAPGGRLSIISFHSLEDRIVKRFMRENSRGPQVPAGLPMTEEQLKKLGGRQLRALGKLMPGEDEVAENPRARSSVLRIAERTNA</sequence>
<organism>
    <name type="scientific">Shigella flexneri serotype 5b (strain 8401)</name>
    <dbReference type="NCBI Taxonomy" id="373384"/>
    <lineage>
        <taxon>Bacteria</taxon>
        <taxon>Pseudomonadati</taxon>
        <taxon>Pseudomonadota</taxon>
        <taxon>Gammaproteobacteria</taxon>
        <taxon>Enterobacterales</taxon>
        <taxon>Enterobacteriaceae</taxon>
        <taxon>Shigella</taxon>
    </lineage>
</organism>
<keyword id="KW-0963">Cytoplasm</keyword>
<keyword id="KW-0489">Methyltransferase</keyword>
<keyword id="KW-0698">rRNA processing</keyword>
<keyword id="KW-0949">S-adenosyl-L-methionine</keyword>
<keyword id="KW-0808">Transferase</keyword>
<name>RSMH_SHIF8</name>
<gene>
    <name evidence="1" type="primary">rsmH</name>
    <name type="synonym">mraW</name>
    <name type="ordered locus">SFV_0075</name>
</gene>
<accession>Q0T8B5</accession>
<evidence type="ECO:0000255" key="1">
    <source>
        <dbReference type="HAMAP-Rule" id="MF_01007"/>
    </source>
</evidence>